<feature type="chain" id="PRO_0000456674" description="Anti-Pycsar protein Apyc1">
    <location>
        <begin position="1"/>
        <end position="242"/>
    </location>
</feature>
<feature type="region of interest" description="Beta-lactamase-like" evidence="2">
    <location>
        <begin position="17"/>
        <end position="216"/>
    </location>
</feature>
<feature type="binding site" evidence="2">
    <location>
        <position position="59"/>
    </location>
    <ligand>
        <name>Zn(2+)</name>
        <dbReference type="ChEBI" id="CHEBI:29105"/>
        <label>2</label>
    </ligand>
</feature>
<feature type="binding site" evidence="1">
    <location>
        <position position="61"/>
    </location>
    <ligand>
        <name>Zn(2+)</name>
        <dbReference type="ChEBI" id="CHEBI:29105"/>
        <label>2</label>
    </ligand>
</feature>
<feature type="binding site" evidence="3">
    <location>
        <position position="63"/>
    </location>
    <ligand>
        <name>Zn(2+)</name>
        <dbReference type="ChEBI" id="CHEBI:29105"/>
        <label>1</label>
    </ligand>
</feature>
<feature type="binding site" evidence="3">
    <location>
        <position position="64"/>
    </location>
    <ligand>
        <name>Zn(2+)</name>
        <dbReference type="ChEBI" id="CHEBI:29105"/>
        <label>1</label>
    </ligand>
</feature>
<feature type="binding site" evidence="2">
    <location>
        <position position="142"/>
    </location>
    <ligand>
        <name>Zn(2+)</name>
        <dbReference type="ChEBI" id="CHEBI:29105"/>
        <label>2</label>
    </ligand>
</feature>
<feature type="binding site" evidence="3">
    <location>
        <position position="162"/>
    </location>
    <ligand>
        <name>Zn(2+)</name>
        <dbReference type="ChEBI" id="CHEBI:29105"/>
        <label>1</label>
    </ligand>
</feature>
<feature type="binding site" evidence="3">
    <location>
        <position position="216"/>
    </location>
    <ligand>
        <name>Zn(2+)</name>
        <dbReference type="ChEBI" id="CHEBI:29105"/>
        <label>1</label>
    </ligand>
</feature>
<organism>
    <name type="scientific">Saccharibacillus brassicae</name>
    <dbReference type="NCBI Taxonomy" id="2583377"/>
    <lineage>
        <taxon>Bacteria</taxon>
        <taxon>Bacillati</taxon>
        <taxon>Bacillota</taxon>
        <taxon>Bacilli</taxon>
        <taxon>Bacillales</taxon>
        <taxon>Paenibacillaceae</taxon>
        <taxon>Saccharibacillus</taxon>
    </lineage>
</organism>
<protein>
    <recommendedName>
        <fullName evidence="5">Anti-Pycsar protein Apyc1</fullName>
        <shortName evidence="5">Apyc1</shortName>
    </recommendedName>
</protein>
<name>ACPY1_SACBS</name>
<evidence type="ECO:0000250" key="1">
    <source>
        <dbReference type="UniProtKB" id="A0A2W1NDJ7"/>
    </source>
</evidence>
<evidence type="ECO:0000250" key="2">
    <source>
        <dbReference type="UniProtKB" id="A0A345MJY6"/>
    </source>
</evidence>
<evidence type="ECO:0000250" key="3">
    <source>
        <dbReference type="UniProtKB" id="P0DTL1"/>
    </source>
</evidence>
<evidence type="ECO:0000269" key="4">
    <source>
    </source>
</evidence>
<evidence type="ECO:0000303" key="5">
    <source>
    </source>
</evidence>
<evidence type="ECO:0000305" key="6"/>
<evidence type="ECO:0000312" key="7">
    <source>
        <dbReference type="EMBL" id="QDH19772.1"/>
    </source>
</evidence>
<comment type="function">
    <text evidence="4">Counteracts the endogenous Pycsar antiviral defense system. Phosphodiesterase that enables metal-dependent hydrolysis of host cyclic nucleotide Pycsar defense signals such as cCMP and cUMP.</text>
</comment>
<comment type="catalytic activity">
    <reaction evidence="4">
        <text>3',5'-cyclic CMP + H2O = CMP + H(+)</text>
        <dbReference type="Rhea" id="RHEA:72675"/>
        <dbReference type="ChEBI" id="CHEBI:15377"/>
        <dbReference type="ChEBI" id="CHEBI:15378"/>
        <dbReference type="ChEBI" id="CHEBI:58003"/>
        <dbReference type="ChEBI" id="CHEBI:60377"/>
    </reaction>
    <physiologicalReaction direction="left-to-right" evidence="4">
        <dbReference type="Rhea" id="RHEA:72676"/>
    </physiologicalReaction>
</comment>
<comment type="catalytic activity">
    <reaction evidence="4">
        <text>3',5'-cyclic UMP + H2O = UMP + H(+)</text>
        <dbReference type="Rhea" id="RHEA:70575"/>
        <dbReference type="ChEBI" id="CHEBI:15377"/>
        <dbReference type="ChEBI" id="CHEBI:15378"/>
        <dbReference type="ChEBI" id="CHEBI:57865"/>
        <dbReference type="ChEBI" id="CHEBI:184387"/>
    </reaction>
    <physiologicalReaction direction="left-to-right" evidence="4">
        <dbReference type="Rhea" id="RHEA:70576"/>
    </physiologicalReaction>
</comment>
<comment type="cofactor">
    <cofactor evidence="2">
        <name>Zn(2+)</name>
        <dbReference type="ChEBI" id="CHEBI:29105"/>
    </cofactor>
    <text evidence="2">Coordinates 2 Zn(2+) ions. One protomer coordinates the metal ions and the opposing protomer provides the catalytic residues required for cCMP hydrolysis.</text>
</comment>
<comment type="subunit">
    <text evidence="3">Homodimer.</text>
</comment>
<comment type="miscellaneous">
    <text evidence="4">This homolog of an antiviral immune evasion nuclease may be due to cryptic prophages, or it may play a role in regulating the endogenous antiviral defense system based on cyclic nucleotides.</text>
</comment>
<comment type="similarity">
    <text evidence="6">Belongs to the anti-Pycsar protein Apyc1 family.</text>
</comment>
<proteinExistence type="evidence at protein level"/>
<accession>A0A4Y6UQ63</accession>
<keyword id="KW-0378">Hydrolase</keyword>
<keyword id="KW-0479">Metal-binding</keyword>
<keyword id="KW-1185">Reference proteome</keyword>
<keyword id="KW-0862">Zinc</keyword>
<gene>
    <name evidence="7" type="ORF">FFV09_02155</name>
</gene>
<dbReference type="EMBL" id="CP041217">
    <property type="protein sequence ID" value="QDH19772.1"/>
    <property type="molecule type" value="Genomic_DNA"/>
</dbReference>
<dbReference type="RefSeq" id="WP_141446159.1">
    <property type="nucleotide sequence ID" value="NZ_CP041217.1"/>
</dbReference>
<dbReference type="SMR" id="A0A4Y6UQ63"/>
<dbReference type="KEGG" id="saca:FFV09_02155"/>
<dbReference type="OrthoDB" id="9803916at2"/>
<dbReference type="Proteomes" id="UP000316968">
    <property type="component" value="Chromosome"/>
</dbReference>
<dbReference type="GO" id="GO:0016787">
    <property type="term" value="F:hydrolase activity"/>
    <property type="evidence" value="ECO:0007669"/>
    <property type="project" value="UniProtKB-KW"/>
</dbReference>
<dbReference type="GO" id="GO:0046872">
    <property type="term" value="F:metal ion binding"/>
    <property type="evidence" value="ECO:0007669"/>
    <property type="project" value="UniProtKB-KW"/>
</dbReference>
<dbReference type="Gene3D" id="3.60.15.10">
    <property type="entry name" value="Ribonuclease Z/Hydroxyacylglutathione hydrolase-like"/>
    <property type="match status" value="1"/>
</dbReference>
<dbReference type="InterPro" id="IPR056308">
    <property type="entry name" value="Anti-Pycsar_Apyc1"/>
</dbReference>
<dbReference type="InterPro" id="IPR001279">
    <property type="entry name" value="Metallo-B-lactamas"/>
</dbReference>
<dbReference type="InterPro" id="IPR036866">
    <property type="entry name" value="RibonucZ/Hydroxyglut_hydro"/>
</dbReference>
<dbReference type="Pfam" id="PF23023">
    <property type="entry name" value="Anti-Pycsar_Apyc1"/>
    <property type="match status" value="1"/>
</dbReference>
<dbReference type="SMART" id="SM00849">
    <property type="entry name" value="Lactamase_B"/>
    <property type="match status" value="1"/>
</dbReference>
<dbReference type="SUPFAM" id="SSF56281">
    <property type="entry name" value="Metallo-hydrolase/oxidoreductase"/>
    <property type="match status" value="1"/>
</dbReference>
<reference key="1">
    <citation type="submission" date="2019-06" db="EMBL/GenBank/DDBJ databases">
        <title>Saccharibacillus brassicae sp. nov., an endophytic bacterium isolated from Chinese cabbage seeds (Brassica pekinensis).</title>
        <authorList>
            <person name="Jiang L."/>
            <person name="Lee J."/>
            <person name="Kim S.W."/>
        </authorList>
    </citation>
    <scope>NUCLEOTIDE SEQUENCE [LARGE SCALE GENOMIC DNA]</scope>
    <source>
        <strain evidence="6">KCTC 43072 / ATSA2</strain>
    </source>
</reference>
<reference key="2">
    <citation type="journal article" date="2022" name="Nature">
        <title>Phage anti-CBASS and anti-Pycsar nucleases subvert bacterial immunity.</title>
        <authorList>
            <person name="Hobbs S.J."/>
            <person name="Wein T."/>
            <person name="Lu A."/>
            <person name="Morehouse B.R."/>
            <person name="Schnabel J."/>
            <person name="Leavitt A."/>
            <person name="Yirmiya E."/>
            <person name="Sorek R."/>
            <person name="Kranzusch P.J."/>
        </authorList>
    </citation>
    <scope>FUNCTION</scope>
    <scope>CATALYTIC ACTIVITY</scope>
    <source>
        <strain evidence="6">KCTC 43072 / ATSA2</strain>
    </source>
</reference>
<sequence>MNLQMIGTGNAFAKKYFNNNALIEQDGFKLLIDCGITAPLALYELGIGMEELDAVLVTHTHGDHVGGLEEYGFQMKFKHGRRPVLLLPEALVDPLWQNTLSGGMTQEGLEKLEDAFDVRALRVGDVQELAPNLCVELVPTSHIAGKKSYSLILNRDVFYSADMTFEPELLTTLVRDRGIRRILHEVQLEGPGAVHTTLDELLSLPEEMQSIIKLMHYADNKEQFVGRTGKMEFLEQGLVYPI</sequence>